<dbReference type="EC" id="5.3.2.5" evidence="1"/>
<dbReference type="EMBL" id="CP000001">
    <property type="protein sequence ID" value="AAU16474.1"/>
    <property type="molecule type" value="Genomic_DNA"/>
</dbReference>
<dbReference type="RefSeq" id="WP_000014189.1">
    <property type="nucleotide sequence ID" value="NZ_CP009968.1"/>
</dbReference>
<dbReference type="SMR" id="Q635P3"/>
<dbReference type="KEGG" id="bcz:BCE33L3793"/>
<dbReference type="PATRIC" id="fig|288681.22.peg.1610"/>
<dbReference type="UniPathway" id="UPA00904">
    <property type="reaction ID" value="UER00876"/>
</dbReference>
<dbReference type="Proteomes" id="UP000002612">
    <property type="component" value="Chromosome"/>
</dbReference>
<dbReference type="GO" id="GO:0043715">
    <property type="term" value="F:2,3-diketo-5-methylthiopentyl-1-phosphate enolase activity"/>
    <property type="evidence" value="ECO:0007669"/>
    <property type="project" value="UniProtKB-UniRule"/>
</dbReference>
<dbReference type="GO" id="GO:0000287">
    <property type="term" value="F:magnesium ion binding"/>
    <property type="evidence" value="ECO:0007669"/>
    <property type="project" value="UniProtKB-UniRule"/>
</dbReference>
<dbReference type="GO" id="GO:0016984">
    <property type="term" value="F:ribulose-bisphosphate carboxylase activity"/>
    <property type="evidence" value="ECO:0007669"/>
    <property type="project" value="InterPro"/>
</dbReference>
<dbReference type="GO" id="GO:0015977">
    <property type="term" value="P:carbon fixation"/>
    <property type="evidence" value="ECO:0007669"/>
    <property type="project" value="InterPro"/>
</dbReference>
<dbReference type="GO" id="GO:0019509">
    <property type="term" value="P:L-methionine salvage from methylthioadenosine"/>
    <property type="evidence" value="ECO:0007669"/>
    <property type="project" value="UniProtKB-UniRule"/>
</dbReference>
<dbReference type="CDD" id="cd08209">
    <property type="entry name" value="RLP_DK-MTP-1-P-enolase"/>
    <property type="match status" value="1"/>
</dbReference>
<dbReference type="FunFam" id="3.20.20.110:FF:000002">
    <property type="entry name" value="2,3-diketo-5-methylthiopentyl-1-phosphate enolase"/>
    <property type="match status" value="1"/>
</dbReference>
<dbReference type="Gene3D" id="3.20.20.110">
    <property type="entry name" value="Ribulose bisphosphate carboxylase, large subunit, C-terminal domain"/>
    <property type="match status" value="1"/>
</dbReference>
<dbReference type="Gene3D" id="3.30.70.150">
    <property type="entry name" value="RuBisCO large subunit, N-terminal domain"/>
    <property type="match status" value="1"/>
</dbReference>
<dbReference type="HAMAP" id="MF_01679">
    <property type="entry name" value="Salvage_MtnW"/>
    <property type="match status" value="1"/>
</dbReference>
<dbReference type="InterPro" id="IPR017717">
    <property type="entry name" value="Diketo-Methiopentyl-P_enolase"/>
</dbReference>
<dbReference type="InterPro" id="IPR033966">
    <property type="entry name" value="RuBisCO"/>
</dbReference>
<dbReference type="InterPro" id="IPR000685">
    <property type="entry name" value="RuBisCO_lsu_C"/>
</dbReference>
<dbReference type="InterPro" id="IPR036376">
    <property type="entry name" value="RuBisCO_lsu_C_sf"/>
</dbReference>
<dbReference type="InterPro" id="IPR017443">
    <property type="entry name" value="RuBisCO_lsu_fd_N"/>
</dbReference>
<dbReference type="InterPro" id="IPR036422">
    <property type="entry name" value="RuBisCO_lsu_N_sf"/>
</dbReference>
<dbReference type="NCBIfam" id="NF007095">
    <property type="entry name" value="PRK09549.1"/>
    <property type="match status" value="1"/>
</dbReference>
<dbReference type="NCBIfam" id="TIGR03332">
    <property type="entry name" value="salvage_mtnW"/>
    <property type="match status" value="1"/>
</dbReference>
<dbReference type="PANTHER" id="PTHR42704">
    <property type="entry name" value="RIBULOSE BISPHOSPHATE CARBOXYLASE"/>
    <property type="match status" value="1"/>
</dbReference>
<dbReference type="PANTHER" id="PTHR42704:SF17">
    <property type="entry name" value="RIBULOSE BISPHOSPHATE CARBOXYLASE LARGE CHAIN"/>
    <property type="match status" value="1"/>
</dbReference>
<dbReference type="Pfam" id="PF00016">
    <property type="entry name" value="RuBisCO_large"/>
    <property type="match status" value="1"/>
</dbReference>
<dbReference type="Pfam" id="PF02788">
    <property type="entry name" value="RuBisCO_large_N"/>
    <property type="match status" value="1"/>
</dbReference>
<dbReference type="SFLD" id="SFLDF00157">
    <property type="entry name" value="2_3-diketo-5-methylthiopentyl"/>
    <property type="match status" value="1"/>
</dbReference>
<dbReference type="SFLD" id="SFLDS00014">
    <property type="entry name" value="RuBisCO"/>
    <property type="match status" value="1"/>
</dbReference>
<dbReference type="SUPFAM" id="SSF51649">
    <property type="entry name" value="RuBisCo, C-terminal domain"/>
    <property type="match status" value="1"/>
</dbReference>
<dbReference type="SUPFAM" id="SSF54966">
    <property type="entry name" value="RuBisCO, large subunit, small (N-terminal) domain"/>
    <property type="match status" value="1"/>
</dbReference>
<accession>Q635P3</accession>
<organism>
    <name type="scientific">Bacillus cereus (strain ZK / E33L)</name>
    <dbReference type="NCBI Taxonomy" id="288681"/>
    <lineage>
        <taxon>Bacteria</taxon>
        <taxon>Bacillati</taxon>
        <taxon>Bacillota</taxon>
        <taxon>Bacilli</taxon>
        <taxon>Bacillales</taxon>
        <taxon>Bacillaceae</taxon>
        <taxon>Bacillus</taxon>
        <taxon>Bacillus cereus group</taxon>
    </lineage>
</organism>
<proteinExistence type="inferred from homology"/>
<protein>
    <recommendedName>
        <fullName evidence="1">2,3-diketo-5-methylthiopentyl-1-phosphate enolase</fullName>
        <shortName evidence="1">DK-MTP-1-P enolase</shortName>
        <ecNumber evidence="1">5.3.2.5</ecNumber>
    </recommendedName>
    <alternativeName>
        <fullName evidence="1">RuBisCO-like protein</fullName>
        <shortName evidence="1">RLP</shortName>
    </alternativeName>
</protein>
<keyword id="KW-0028">Amino-acid biosynthesis</keyword>
<keyword id="KW-0413">Isomerase</keyword>
<keyword id="KW-0460">Magnesium</keyword>
<keyword id="KW-0479">Metal-binding</keyword>
<keyword id="KW-0486">Methionine biosynthesis</keyword>
<gene>
    <name evidence="1" type="primary">mtnW</name>
    <name type="ordered locus">BCE33L3793</name>
</gene>
<comment type="function">
    <text evidence="1">Catalyzes the enolization of 2,3-diketo-5-methylthiopentyl-1-phosphate (DK-MTP-1-P) into 2-hydroxy-3-keto-5-methylthiopentenyl-1-phosphate (HK-MTPenyl-1-P).</text>
</comment>
<comment type="catalytic activity">
    <reaction evidence="1">
        <text>5-methylsulfanyl-2,3-dioxopentyl phosphate = 2-hydroxy-5-methylsulfanyl-3-oxopent-1-enyl phosphate</text>
        <dbReference type="Rhea" id="RHEA:18769"/>
        <dbReference type="ChEBI" id="CHEBI:58828"/>
        <dbReference type="ChEBI" id="CHEBI:59505"/>
        <dbReference type="EC" id="5.3.2.5"/>
    </reaction>
</comment>
<comment type="cofactor">
    <cofactor evidence="1">
        <name>Mg(2+)</name>
        <dbReference type="ChEBI" id="CHEBI:18420"/>
    </cofactor>
    <text evidence="1">Binds 1 Mg(2+) ion per subunit.</text>
</comment>
<comment type="pathway">
    <text evidence="1">Amino-acid biosynthesis; L-methionine biosynthesis via salvage pathway; L-methionine from S-methyl-5-thio-alpha-D-ribose 1-phosphate: step 3/6.</text>
</comment>
<comment type="subunit">
    <text evidence="1">Homodimer.</text>
</comment>
<comment type="miscellaneous">
    <text evidence="1">Has no RuBP-carboxylation activity.</text>
</comment>
<comment type="similarity">
    <text evidence="1">Belongs to the RuBisCO large chain family. Type IV subfamily.</text>
</comment>
<feature type="chain" id="PRO_0000062690" description="2,3-diketo-5-methylthiopentyl-1-phosphate enolase">
    <location>
        <begin position="1"/>
        <end position="414"/>
    </location>
</feature>
<feature type="active site" description="Proton acceptor" evidence="1">
    <location>
        <position position="99"/>
    </location>
</feature>
<feature type="binding site" evidence="1">
    <location>
        <position position="148"/>
    </location>
    <ligand>
        <name>substrate</name>
    </ligand>
</feature>
<feature type="binding site" evidence="1">
    <location>
        <begin position="174"/>
        <end position="177"/>
    </location>
    <ligand>
        <name>substrate</name>
    </ligand>
</feature>
<feature type="binding site" description="via carbamate group" evidence="1">
    <location>
        <position position="174"/>
    </location>
    <ligand>
        <name>Mg(2+)</name>
        <dbReference type="ChEBI" id="CHEBI:18420"/>
    </ligand>
</feature>
<feature type="binding site" evidence="1">
    <location>
        <position position="176"/>
    </location>
    <ligand>
        <name>Mg(2+)</name>
        <dbReference type="ChEBI" id="CHEBI:18420"/>
    </ligand>
</feature>
<feature type="binding site" evidence="1">
    <location>
        <position position="177"/>
    </location>
    <ligand>
        <name>Mg(2+)</name>
        <dbReference type="ChEBI" id="CHEBI:18420"/>
    </ligand>
</feature>
<feature type="binding site" evidence="1">
    <location>
        <position position="265"/>
    </location>
    <ligand>
        <name>substrate</name>
    </ligand>
</feature>
<feature type="binding site" evidence="1">
    <location>
        <position position="338"/>
    </location>
    <ligand>
        <name>substrate</name>
    </ligand>
</feature>
<feature type="binding site" evidence="1">
    <location>
        <begin position="360"/>
        <end position="361"/>
    </location>
    <ligand>
        <name>substrate</name>
    </ligand>
</feature>
<feature type="modified residue" description="N6-carboxylysine" evidence="1">
    <location>
        <position position="174"/>
    </location>
</feature>
<evidence type="ECO:0000255" key="1">
    <source>
        <dbReference type="HAMAP-Rule" id="MF_01679"/>
    </source>
</evidence>
<reference key="1">
    <citation type="journal article" date="2006" name="J. Bacteriol.">
        <title>Pathogenomic sequence analysis of Bacillus cereus and Bacillus thuringiensis isolates closely related to Bacillus anthracis.</title>
        <authorList>
            <person name="Han C.S."/>
            <person name="Xie G."/>
            <person name="Challacombe J.F."/>
            <person name="Altherr M.R."/>
            <person name="Bhotika S.S."/>
            <person name="Bruce D."/>
            <person name="Campbell C.S."/>
            <person name="Campbell M.L."/>
            <person name="Chen J."/>
            <person name="Chertkov O."/>
            <person name="Cleland C."/>
            <person name="Dimitrijevic M."/>
            <person name="Doggett N.A."/>
            <person name="Fawcett J.J."/>
            <person name="Glavina T."/>
            <person name="Goodwin L.A."/>
            <person name="Hill K.K."/>
            <person name="Hitchcock P."/>
            <person name="Jackson P.J."/>
            <person name="Keim P."/>
            <person name="Kewalramani A.R."/>
            <person name="Longmire J."/>
            <person name="Lucas S."/>
            <person name="Malfatti S."/>
            <person name="McMurry K."/>
            <person name="Meincke L.J."/>
            <person name="Misra M."/>
            <person name="Moseman B.L."/>
            <person name="Mundt M."/>
            <person name="Munk A.C."/>
            <person name="Okinaka R.T."/>
            <person name="Parson-Quintana B."/>
            <person name="Reilly L.P."/>
            <person name="Richardson P."/>
            <person name="Robinson D.L."/>
            <person name="Rubin E."/>
            <person name="Saunders E."/>
            <person name="Tapia R."/>
            <person name="Tesmer J.G."/>
            <person name="Thayer N."/>
            <person name="Thompson L.S."/>
            <person name="Tice H."/>
            <person name="Ticknor L.O."/>
            <person name="Wills P.L."/>
            <person name="Brettin T.S."/>
            <person name="Gilna P."/>
        </authorList>
    </citation>
    <scope>NUCLEOTIDE SEQUENCE [LARGE SCALE GENOMIC DNA]</scope>
    <source>
        <strain>ZK / E33L</strain>
    </source>
</reference>
<sequence length="414" mass="45467">MSGIIATYLIHDDSHNLEKKAEQIALGLTIGSWTHLPHLLQEQLKQHKGNVIHVEELAEHEHTNSYLRKKVKRGIIKIEYPLLNFSPDLPAILTTTFGKLSLDGEVKLIDLTFSDGLKKHFPGPKFGIDGIRNLLQVHDRPLLMSIFKGMIGRNIGYLKTQLRDQAIGGVDIVKDDEILFENALTPLTKRIVSGKEVLQSVYETYGHKTLYAVNVTGRTFDLKENAKRAVQAGADILLFNVFAYGLDVLQSLAEDDEIPVPIMAHPAVSGAYSASKLYGISSPLLLGKLLRYAGADFSLFPSPYGSVALEKEEALAISKYLTEDDVFFKKSFSVPSAGIHPGFVPFIIRDFGKDVVINAGGGIHGHPNGAQGGGKAFRTAIDATLQNKPLHEVDDINLHSALQIWGNPSHEVKL</sequence>
<name>MTNW_BACCZ</name>